<protein>
    <recommendedName>
        <fullName evidence="3">Ocellatin-PT2</fullName>
    </recommendedName>
</protein>
<feature type="signal peptide" evidence="1">
    <location>
        <begin position="1"/>
        <end position="22"/>
    </location>
</feature>
<feature type="propeptide" id="PRO_0000436210" evidence="4">
    <location>
        <begin position="23"/>
        <end position="39"/>
    </location>
</feature>
<feature type="peptide" id="PRO_0000436211" description="Ocellatin-PT2" evidence="2">
    <location>
        <begin position="42"/>
        <end position="66"/>
    </location>
</feature>
<feature type="modified residue" description="Valine amide" evidence="2">
    <location>
        <position position="66"/>
    </location>
</feature>
<accession>C0HJZ7</accession>
<evidence type="ECO:0000255" key="1"/>
<evidence type="ECO:0000269" key="2">
    <source>
    </source>
</evidence>
<evidence type="ECO:0000303" key="3">
    <source>
    </source>
</evidence>
<evidence type="ECO:0000305" key="4"/>
<evidence type="ECO:0000305" key="5">
    <source>
    </source>
</evidence>
<proteinExistence type="evidence at protein level"/>
<keyword id="KW-0027">Amidation</keyword>
<keyword id="KW-0878">Amphibian defense peptide</keyword>
<keyword id="KW-0165">Cleavage on pair of basic residues</keyword>
<keyword id="KW-0903">Direct protein sequencing</keyword>
<keyword id="KW-0964">Secreted</keyword>
<keyword id="KW-0732">Signal</keyword>
<comment type="function">
    <text evidence="2">Has no antibacterial activity against Gram-negative bacteria E.coli ATCC 25922, S.pneumoniae ATCC 700603 and S.choleraesuis ATCC 14028 or against Gram-positive bacterium S.aureus ATCC 29313. Shows no hemolytic activity and no cytotoxicity.</text>
</comment>
<comment type="subcellular location">
    <subcellularLocation>
        <location evidence="2">Secreted</location>
    </subcellularLocation>
</comment>
<comment type="tissue specificity">
    <text evidence="5">Expressed by the skin glands.</text>
</comment>
<comment type="mass spectrometry"/>
<comment type="similarity">
    <text evidence="4">Belongs to the frog skin active peptide (FSAP) family. Ocellatin subfamily.</text>
</comment>
<reference evidence="4" key="1">
    <citation type="journal article" date="2015" name="J. Nat. Prod.">
        <title>Characterization and biological activities of ocellatin peptides from the skin secretion of the frog Leptodactylus pustulatus.</title>
        <authorList>
            <person name="Marani M.M."/>
            <person name="Dourado F.S."/>
            <person name="Quelemes P.V."/>
            <person name="de Araujo A.R."/>
            <person name="Perfeito M.L."/>
            <person name="Barbosa E.A."/>
            <person name="Veras L.M."/>
            <person name="Coelho A.L."/>
            <person name="Andrade E.B."/>
            <person name="Eaton P."/>
            <person name="Longo J.P."/>
            <person name="Azevedo R.B."/>
            <person name="Delerue-Matos C."/>
            <person name="Leite J.R."/>
        </authorList>
    </citation>
    <scope>NUCLEOTIDE SEQUENCE [MRNA]</scope>
    <scope>PROTEIN SEQUENCE OF 42-66</scope>
    <scope>FUNCTION</scope>
    <scope>SUBCELLULAR LOCATION</scope>
    <scope>MASS SPECTROMETRY</scope>
    <scope>AMIDATION AT VAL-66</scope>
    <scope>IDENTIFICATION BY MASS SPECTROMETRY</scope>
    <source>
        <tissue evidence="3">Skin secretion</tissue>
    </source>
</reference>
<dbReference type="GO" id="GO:0005576">
    <property type="term" value="C:extracellular region"/>
    <property type="evidence" value="ECO:0007669"/>
    <property type="project" value="UniProtKB-SubCell"/>
</dbReference>
<dbReference type="GO" id="GO:0006952">
    <property type="term" value="P:defense response"/>
    <property type="evidence" value="ECO:0007669"/>
    <property type="project" value="UniProtKB-KW"/>
</dbReference>
<dbReference type="GO" id="GO:0019836">
    <property type="term" value="P:symbiont-mediated hemolysis of host erythrocyte"/>
    <property type="evidence" value="ECO:0007669"/>
    <property type="project" value="InterPro"/>
</dbReference>
<dbReference type="InterPro" id="IPR012518">
    <property type="entry name" value="Antimicrobial15"/>
</dbReference>
<dbReference type="InterPro" id="IPR004275">
    <property type="entry name" value="Frog_antimicrobial_propeptide"/>
</dbReference>
<dbReference type="InterPro" id="IPR016322">
    <property type="entry name" value="FSAP"/>
</dbReference>
<dbReference type="Pfam" id="PF08110">
    <property type="entry name" value="Antimicrobial15"/>
    <property type="match status" value="1"/>
</dbReference>
<dbReference type="Pfam" id="PF03032">
    <property type="entry name" value="FSAP_sig_propep"/>
    <property type="match status" value="1"/>
</dbReference>
<dbReference type="PIRSF" id="PIRSF001822">
    <property type="entry name" value="Dermaseptin_precursor"/>
    <property type="match status" value="1"/>
</dbReference>
<name>OCE2_LEPPU</name>
<organism>
    <name type="scientific">Leptodactylus pustulatus</name>
    <name type="common">Ceara white-lipped frog</name>
    <dbReference type="NCBI Taxonomy" id="1349691"/>
    <lineage>
        <taxon>Eukaryota</taxon>
        <taxon>Metazoa</taxon>
        <taxon>Chordata</taxon>
        <taxon>Craniata</taxon>
        <taxon>Vertebrata</taxon>
        <taxon>Euteleostomi</taxon>
        <taxon>Amphibia</taxon>
        <taxon>Batrachia</taxon>
        <taxon>Anura</taxon>
        <taxon>Neobatrachia</taxon>
        <taxon>Hyloidea</taxon>
        <taxon>Leptodactylidae</taxon>
        <taxon>Leptodactylinae</taxon>
        <taxon>Leptodactylus</taxon>
    </lineage>
</organism>
<sequence>MAFLKKSLFLVLFLGLVSLSICDEEKRQDEDDDDDDDEEKRGVFDIIKDAGKQLVAHATGKIAEKV</sequence>